<sequence length="331" mass="37603">MELEFLYDLLQLPKEVAQPTEEELPRGGKKKYLSPNSKRNPKFEELQKVLMEWINTTLLPEHIVVRSLEEDMFDGLILHHLFQKLASLKLEVEEISLTSASQRHKLGVILEAVNQNLQVEEKQAKWSVETIFNKDLLATLHLLVALAKRFQPDLPLPDNVQVEVIHIESTKTGLKSDKQVEQLTECKSHKDQPLQDAFDELFKLAPEKVHAVQEAIVSFVNQKLERLGLSVQSLDTQFADGVILLLLIGQLEGFFLHLKEFYLTPSSPTEMLHNVTLALDLLKDEGLFSYPVNPEDIVNKDAKSTLRILYSLFQKHSLRAEGGGAHHATPN</sequence>
<name>PARVG_MOUSE</name>
<dbReference type="EMBL" id="AF312712">
    <property type="protein sequence ID" value="AAG29542.1"/>
    <property type="molecule type" value="mRNA"/>
</dbReference>
<dbReference type="EMBL" id="AK040914">
    <property type="protein sequence ID" value="BAC30741.1"/>
    <property type="molecule type" value="mRNA"/>
</dbReference>
<dbReference type="EMBL" id="AK079881">
    <property type="protein sequence ID" value="BAC37772.1"/>
    <property type="molecule type" value="mRNA"/>
</dbReference>
<dbReference type="EMBL" id="AL626769">
    <property type="status" value="NOT_ANNOTATED_CDS"/>
    <property type="molecule type" value="Genomic_DNA"/>
</dbReference>
<dbReference type="EMBL" id="BC011200">
    <property type="protein sequence ID" value="AAH11200.1"/>
    <property type="molecule type" value="mRNA"/>
</dbReference>
<dbReference type="CCDS" id="CCDS27710.1"/>
<dbReference type="RefSeq" id="NP_001155972.1">
    <property type="nucleotide sequence ID" value="NM_001162500.1"/>
</dbReference>
<dbReference type="RefSeq" id="NP_071716.3">
    <property type="nucleotide sequence ID" value="NM_022321.4"/>
</dbReference>
<dbReference type="RefSeq" id="XP_011244008.1">
    <property type="nucleotide sequence ID" value="XM_011245706.4"/>
</dbReference>
<dbReference type="SMR" id="Q9ERD8"/>
<dbReference type="BioGRID" id="211027">
    <property type="interactions" value="1"/>
</dbReference>
<dbReference type="FunCoup" id="Q9ERD8">
    <property type="interactions" value="228"/>
</dbReference>
<dbReference type="IntAct" id="Q9ERD8">
    <property type="interactions" value="1"/>
</dbReference>
<dbReference type="STRING" id="10090.ENSMUSP00000131443"/>
<dbReference type="iPTMnet" id="Q9ERD8"/>
<dbReference type="PhosphoSitePlus" id="Q9ERD8"/>
<dbReference type="PaxDb" id="10090-ENSMUSP00000023074"/>
<dbReference type="ProteomicsDB" id="294161"/>
<dbReference type="Antibodypedia" id="27676">
    <property type="antibodies" value="112 antibodies from 26 providers"/>
</dbReference>
<dbReference type="DNASU" id="64099"/>
<dbReference type="Ensembl" id="ENSMUST00000023074.9">
    <property type="protein sequence ID" value="ENSMUSP00000023074.3"/>
    <property type="gene ID" value="ENSMUSG00000022439.10"/>
</dbReference>
<dbReference type="GeneID" id="64099"/>
<dbReference type="KEGG" id="mmu:64099"/>
<dbReference type="UCSC" id="uc007xbz.2">
    <property type="organism name" value="mouse"/>
</dbReference>
<dbReference type="AGR" id="MGI:2158329"/>
<dbReference type="CTD" id="64098"/>
<dbReference type="MGI" id="MGI:2158329">
    <property type="gene designation" value="Parvg"/>
</dbReference>
<dbReference type="VEuPathDB" id="HostDB:ENSMUSG00000022439"/>
<dbReference type="eggNOG" id="KOG3631">
    <property type="taxonomic scope" value="Eukaryota"/>
</dbReference>
<dbReference type="GeneTree" id="ENSGT00950000183194"/>
<dbReference type="HOGENOM" id="CLU_047624_0_0_1"/>
<dbReference type="InParanoid" id="Q9ERD8"/>
<dbReference type="OMA" id="SEHIVVQ"/>
<dbReference type="OrthoDB" id="2099265at2759"/>
<dbReference type="TreeFam" id="TF314025"/>
<dbReference type="BioGRID-ORCS" id="64099">
    <property type="hits" value="1 hit in 78 CRISPR screens"/>
</dbReference>
<dbReference type="PRO" id="PR:Q9ERD8"/>
<dbReference type="Proteomes" id="UP000000589">
    <property type="component" value="Chromosome 15"/>
</dbReference>
<dbReference type="RNAct" id="Q9ERD8">
    <property type="molecule type" value="protein"/>
</dbReference>
<dbReference type="Bgee" id="ENSMUSG00000022439">
    <property type="expression patterns" value="Expressed in granulocyte and 96 other cell types or tissues"/>
</dbReference>
<dbReference type="ExpressionAtlas" id="Q9ERD8">
    <property type="expression patterns" value="baseline and differential"/>
</dbReference>
<dbReference type="GO" id="GO:0005737">
    <property type="term" value="C:cytoplasm"/>
    <property type="evidence" value="ECO:0007669"/>
    <property type="project" value="UniProtKB-KW"/>
</dbReference>
<dbReference type="GO" id="GO:0005856">
    <property type="term" value="C:cytoskeleton"/>
    <property type="evidence" value="ECO:0007669"/>
    <property type="project" value="UniProtKB-SubCell"/>
</dbReference>
<dbReference type="GO" id="GO:0005925">
    <property type="term" value="C:focal adhesion"/>
    <property type="evidence" value="ECO:0007669"/>
    <property type="project" value="UniProtKB-SubCell"/>
</dbReference>
<dbReference type="GO" id="GO:0005886">
    <property type="term" value="C:plasma membrane"/>
    <property type="evidence" value="ECO:0007669"/>
    <property type="project" value="UniProtKB-SubCell"/>
</dbReference>
<dbReference type="GO" id="GO:0003779">
    <property type="term" value="F:actin binding"/>
    <property type="evidence" value="ECO:0007669"/>
    <property type="project" value="UniProtKB-KW"/>
</dbReference>
<dbReference type="GO" id="GO:0030036">
    <property type="term" value="P:actin cytoskeleton organization"/>
    <property type="evidence" value="ECO:0007669"/>
    <property type="project" value="InterPro"/>
</dbReference>
<dbReference type="GO" id="GO:0007155">
    <property type="term" value="P:cell adhesion"/>
    <property type="evidence" value="ECO:0007669"/>
    <property type="project" value="UniProtKB-KW"/>
</dbReference>
<dbReference type="CDD" id="cd21305">
    <property type="entry name" value="CH_PARVG_rpt1"/>
    <property type="match status" value="1"/>
</dbReference>
<dbReference type="CDD" id="cd21307">
    <property type="entry name" value="CH_PARVG_rpt2"/>
    <property type="match status" value="1"/>
</dbReference>
<dbReference type="FunFam" id="1.10.418.10:FF:000011">
    <property type="entry name" value="Parvin, beta"/>
    <property type="match status" value="1"/>
</dbReference>
<dbReference type="FunFam" id="1.10.418.10:FF:000064">
    <property type="entry name" value="Parvin, gamma"/>
    <property type="match status" value="1"/>
</dbReference>
<dbReference type="Gene3D" id="1.10.418.10">
    <property type="entry name" value="Calponin-like domain"/>
    <property type="match status" value="2"/>
</dbReference>
<dbReference type="InterPro" id="IPR001715">
    <property type="entry name" value="CH_dom"/>
</dbReference>
<dbReference type="InterPro" id="IPR036872">
    <property type="entry name" value="CH_dom_sf"/>
</dbReference>
<dbReference type="InterPro" id="IPR028433">
    <property type="entry name" value="Parvin"/>
</dbReference>
<dbReference type="PANTHER" id="PTHR12114:SF1">
    <property type="entry name" value="GAMMA-PARVIN"/>
    <property type="match status" value="1"/>
</dbReference>
<dbReference type="PANTHER" id="PTHR12114">
    <property type="entry name" value="PARVIN"/>
    <property type="match status" value="1"/>
</dbReference>
<dbReference type="Pfam" id="PF00307">
    <property type="entry name" value="CH"/>
    <property type="match status" value="2"/>
</dbReference>
<dbReference type="PIRSF" id="PIRSF039131">
    <property type="entry name" value="Parvin"/>
    <property type="match status" value="1"/>
</dbReference>
<dbReference type="SUPFAM" id="SSF47576">
    <property type="entry name" value="Calponin-homology domain, CH-domain"/>
    <property type="match status" value="1"/>
</dbReference>
<dbReference type="PROSITE" id="PS50021">
    <property type="entry name" value="CH"/>
    <property type="match status" value="2"/>
</dbReference>
<feature type="chain" id="PRO_0000121586" description="Gamma-parvin">
    <location>
        <begin position="1"/>
        <end position="331"/>
    </location>
</feature>
<feature type="domain" description="Calponin-homology (CH) 1" evidence="3">
    <location>
        <begin position="44"/>
        <end position="151"/>
    </location>
</feature>
<feature type="domain" description="Calponin-homology (CH) 2" evidence="3">
    <location>
        <begin position="210"/>
        <end position="317"/>
    </location>
</feature>
<feature type="region of interest" description="Disordered" evidence="4">
    <location>
        <begin position="18"/>
        <end position="38"/>
    </location>
</feature>
<feature type="modified residue" description="N-acetylmethionine" evidence="2">
    <location>
        <position position="1"/>
    </location>
</feature>
<feature type="sequence conflict" description="In Ref. 3; AAH11200." evidence="6" ref="3">
    <original>L</original>
    <variation>S</variation>
    <location>
        <position position="3"/>
    </location>
</feature>
<feature type="sequence conflict" description="In Ref. 1; AAG29542." evidence="6" ref="1">
    <original>N</original>
    <variation>S</variation>
    <location>
        <position position="40"/>
    </location>
</feature>
<feature type="sequence conflict" description="In Ref. 3; AAH11200." evidence="6" ref="3">
    <original>K</original>
    <variation>T</variation>
    <location>
        <position position="259"/>
    </location>
</feature>
<evidence type="ECO:0000250" key="1"/>
<evidence type="ECO:0000250" key="2">
    <source>
        <dbReference type="UniProtKB" id="Q9HBI0"/>
    </source>
</evidence>
<evidence type="ECO:0000255" key="3">
    <source>
        <dbReference type="PROSITE-ProRule" id="PRU00044"/>
    </source>
</evidence>
<evidence type="ECO:0000256" key="4">
    <source>
        <dbReference type="SAM" id="MobiDB-lite"/>
    </source>
</evidence>
<evidence type="ECO:0000269" key="5">
    <source>
    </source>
</evidence>
<evidence type="ECO:0000305" key="6"/>
<comment type="function">
    <text evidence="2">Plays a role with ILK in promoting the cell adhesion and spreading of leukocytes.</text>
</comment>
<comment type="subunit">
    <text evidence="2">Interacts with ILK; the interaction promotes the establishment of cell polarity required for leukocyte migration. Interacts with ARHGEF6; the guanine nucleotide exchange factor activity of ARHGEF6 is essential for the PARVG-induced enhancement of cell spreading.</text>
</comment>
<comment type="subcellular location">
    <subcellularLocation>
        <location>Cell junction</location>
        <location>Focal adhesion</location>
    </subcellularLocation>
    <subcellularLocation>
        <location evidence="1">Cell membrane</location>
        <topology evidence="1">Peripheral membrane protein</topology>
        <orientation evidence="1">Cytoplasmic side</orientation>
    </subcellularLocation>
    <subcellularLocation>
        <location evidence="1">Cytoplasm</location>
        <location evidence="1">Cytoskeleton</location>
    </subcellularLocation>
    <text evidence="1">Constituent of focal adhesions.</text>
</comment>
<comment type="tissue specificity">
    <text evidence="5">Expressed strongly in spleen and testis, moderately in lung and weakly in brain and heart.</text>
</comment>
<comment type="similarity">
    <text evidence="6">Belongs to the parvin family.</text>
</comment>
<gene>
    <name type="primary">Parvg</name>
</gene>
<proteinExistence type="evidence at protein level"/>
<keyword id="KW-0007">Acetylation</keyword>
<keyword id="KW-0009">Actin-binding</keyword>
<keyword id="KW-0130">Cell adhesion</keyword>
<keyword id="KW-0965">Cell junction</keyword>
<keyword id="KW-1003">Cell membrane</keyword>
<keyword id="KW-0963">Cytoplasm</keyword>
<keyword id="KW-0206">Cytoskeleton</keyword>
<keyword id="KW-0472">Membrane</keyword>
<keyword id="KW-1185">Reference proteome</keyword>
<keyword id="KW-0677">Repeat</keyword>
<protein>
    <recommendedName>
        <fullName>Gamma-parvin</fullName>
    </recommendedName>
</protein>
<accession>Q9ERD8</accession>
<accession>Q8BH45</accession>
<accession>Q91X89</accession>
<organism>
    <name type="scientific">Mus musculus</name>
    <name type="common">Mouse</name>
    <dbReference type="NCBI Taxonomy" id="10090"/>
    <lineage>
        <taxon>Eukaryota</taxon>
        <taxon>Metazoa</taxon>
        <taxon>Chordata</taxon>
        <taxon>Craniata</taxon>
        <taxon>Vertebrata</taxon>
        <taxon>Euteleostomi</taxon>
        <taxon>Mammalia</taxon>
        <taxon>Eutheria</taxon>
        <taxon>Euarchontoglires</taxon>
        <taxon>Glires</taxon>
        <taxon>Rodentia</taxon>
        <taxon>Myomorpha</taxon>
        <taxon>Muroidea</taxon>
        <taxon>Muridae</taxon>
        <taxon>Murinae</taxon>
        <taxon>Mus</taxon>
        <taxon>Mus</taxon>
    </lineage>
</organism>
<reference key="1">
    <citation type="journal article" date="2001" name="J. Cell Sci.">
        <title>Parvin, a 42 kDa focal adhesion protein, related to the alpha-actinin superfamily.</title>
        <authorList>
            <person name="Olski T.M."/>
            <person name="Noegel A.A."/>
            <person name="Korenbaum E."/>
        </authorList>
    </citation>
    <scope>NUCLEOTIDE SEQUENCE [MRNA]</scope>
</reference>
<reference key="2">
    <citation type="journal article" date="2005" name="Science">
        <title>The transcriptional landscape of the mammalian genome.</title>
        <authorList>
            <person name="Carninci P."/>
            <person name="Kasukawa T."/>
            <person name="Katayama S."/>
            <person name="Gough J."/>
            <person name="Frith M.C."/>
            <person name="Maeda N."/>
            <person name="Oyama R."/>
            <person name="Ravasi T."/>
            <person name="Lenhard B."/>
            <person name="Wells C."/>
            <person name="Kodzius R."/>
            <person name="Shimokawa K."/>
            <person name="Bajic V.B."/>
            <person name="Brenner S.E."/>
            <person name="Batalov S."/>
            <person name="Forrest A.R."/>
            <person name="Zavolan M."/>
            <person name="Davis M.J."/>
            <person name="Wilming L.G."/>
            <person name="Aidinis V."/>
            <person name="Allen J.E."/>
            <person name="Ambesi-Impiombato A."/>
            <person name="Apweiler R."/>
            <person name="Aturaliya R.N."/>
            <person name="Bailey T.L."/>
            <person name="Bansal M."/>
            <person name="Baxter L."/>
            <person name="Beisel K.W."/>
            <person name="Bersano T."/>
            <person name="Bono H."/>
            <person name="Chalk A.M."/>
            <person name="Chiu K.P."/>
            <person name="Choudhary V."/>
            <person name="Christoffels A."/>
            <person name="Clutterbuck D.R."/>
            <person name="Crowe M.L."/>
            <person name="Dalla E."/>
            <person name="Dalrymple B.P."/>
            <person name="de Bono B."/>
            <person name="Della Gatta G."/>
            <person name="di Bernardo D."/>
            <person name="Down T."/>
            <person name="Engstrom P."/>
            <person name="Fagiolini M."/>
            <person name="Faulkner G."/>
            <person name="Fletcher C.F."/>
            <person name="Fukushima T."/>
            <person name="Furuno M."/>
            <person name="Futaki S."/>
            <person name="Gariboldi M."/>
            <person name="Georgii-Hemming P."/>
            <person name="Gingeras T.R."/>
            <person name="Gojobori T."/>
            <person name="Green R.E."/>
            <person name="Gustincich S."/>
            <person name="Harbers M."/>
            <person name="Hayashi Y."/>
            <person name="Hensch T.K."/>
            <person name="Hirokawa N."/>
            <person name="Hill D."/>
            <person name="Huminiecki L."/>
            <person name="Iacono M."/>
            <person name="Ikeo K."/>
            <person name="Iwama A."/>
            <person name="Ishikawa T."/>
            <person name="Jakt M."/>
            <person name="Kanapin A."/>
            <person name="Katoh M."/>
            <person name="Kawasawa Y."/>
            <person name="Kelso J."/>
            <person name="Kitamura H."/>
            <person name="Kitano H."/>
            <person name="Kollias G."/>
            <person name="Krishnan S.P."/>
            <person name="Kruger A."/>
            <person name="Kummerfeld S.K."/>
            <person name="Kurochkin I.V."/>
            <person name="Lareau L.F."/>
            <person name="Lazarevic D."/>
            <person name="Lipovich L."/>
            <person name="Liu J."/>
            <person name="Liuni S."/>
            <person name="McWilliam S."/>
            <person name="Madan Babu M."/>
            <person name="Madera M."/>
            <person name="Marchionni L."/>
            <person name="Matsuda H."/>
            <person name="Matsuzawa S."/>
            <person name="Miki H."/>
            <person name="Mignone F."/>
            <person name="Miyake S."/>
            <person name="Morris K."/>
            <person name="Mottagui-Tabar S."/>
            <person name="Mulder N."/>
            <person name="Nakano N."/>
            <person name="Nakauchi H."/>
            <person name="Ng P."/>
            <person name="Nilsson R."/>
            <person name="Nishiguchi S."/>
            <person name="Nishikawa S."/>
            <person name="Nori F."/>
            <person name="Ohara O."/>
            <person name="Okazaki Y."/>
            <person name="Orlando V."/>
            <person name="Pang K.C."/>
            <person name="Pavan W.J."/>
            <person name="Pavesi G."/>
            <person name="Pesole G."/>
            <person name="Petrovsky N."/>
            <person name="Piazza S."/>
            <person name="Reed J."/>
            <person name="Reid J.F."/>
            <person name="Ring B.Z."/>
            <person name="Ringwald M."/>
            <person name="Rost B."/>
            <person name="Ruan Y."/>
            <person name="Salzberg S.L."/>
            <person name="Sandelin A."/>
            <person name="Schneider C."/>
            <person name="Schoenbach C."/>
            <person name="Sekiguchi K."/>
            <person name="Semple C.A."/>
            <person name="Seno S."/>
            <person name="Sessa L."/>
            <person name="Sheng Y."/>
            <person name="Shibata Y."/>
            <person name="Shimada H."/>
            <person name="Shimada K."/>
            <person name="Silva D."/>
            <person name="Sinclair B."/>
            <person name="Sperling S."/>
            <person name="Stupka E."/>
            <person name="Sugiura K."/>
            <person name="Sultana R."/>
            <person name="Takenaka Y."/>
            <person name="Taki K."/>
            <person name="Tammoja K."/>
            <person name="Tan S.L."/>
            <person name="Tang S."/>
            <person name="Taylor M.S."/>
            <person name="Tegner J."/>
            <person name="Teichmann S.A."/>
            <person name="Ueda H.R."/>
            <person name="van Nimwegen E."/>
            <person name="Verardo R."/>
            <person name="Wei C.L."/>
            <person name="Yagi K."/>
            <person name="Yamanishi H."/>
            <person name="Zabarovsky E."/>
            <person name="Zhu S."/>
            <person name="Zimmer A."/>
            <person name="Hide W."/>
            <person name="Bult C."/>
            <person name="Grimmond S.M."/>
            <person name="Teasdale R.D."/>
            <person name="Liu E.T."/>
            <person name="Brusic V."/>
            <person name="Quackenbush J."/>
            <person name="Wahlestedt C."/>
            <person name="Mattick J.S."/>
            <person name="Hume D.A."/>
            <person name="Kai C."/>
            <person name="Sasaki D."/>
            <person name="Tomaru Y."/>
            <person name="Fukuda S."/>
            <person name="Kanamori-Katayama M."/>
            <person name="Suzuki M."/>
            <person name="Aoki J."/>
            <person name="Arakawa T."/>
            <person name="Iida J."/>
            <person name="Imamura K."/>
            <person name="Itoh M."/>
            <person name="Kato T."/>
            <person name="Kawaji H."/>
            <person name="Kawagashira N."/>
            <person name="Kawashima T."/>
            <person name="Kojima M."/>
            <person name="Kondo S."/>
            <person name="Konno H."/>
            <person name="Nakano K."/>
            <person name="Ninomiya N."/>
            <person name="Nishio T."/>
            <person name="Okada M."/>
            <person name="Plessy C."/>
            <person name="Shibata K."/>
            <person name="Shiraki T."/>
            <person name="Suzuki S."/>
            <person name="Tagami M."/>
            <person name="Waki K."/>
            <person name="Watahiki A."/>
            <person name="Okamura-Oho Y."/>
            <person name="Suzuki H."/>
            <person name="Kawai J."/>
            <person name="Hayashizaki Y."/>
        </authorList>
    </citation>
    <scope>NUCLEOTIDE SEQUENCE [LARGE SCALE MRNA]</scope>
    <source>
        <strain>C57BL/6J</strain>
        <tissue>Aorta</tissue>
        <tissue>Thymus</tissue>
        <tissue>Vein</tissue>
    </source>
</reference>
<reference key="3">
    <citation type="journal article" date="2009" name="PLoS Biol.">
        <title>Lineage-specific biology revealed by a finished genome assembly of the mouse.</title>
        <authorList>
            <person name="Church D.M."/>
            <person name="Goodstadt L."/>
            <person name="Hillier L.W."/>
            <person name="Zody M.C."/>
            <person name="Goldstein S."/>
            <person name="She X."/>
            <person name="Bult C.J."/>
            <person name="Agarwala R."/>
            <person name="Cherry J.L."/>
            <person name="DiCuccio M."/>
            <person name="Hlavina W."/>
            <person name="Kapustin Y."/>
            <person name="Meric P."/>
            <person name="Maglott D."/>
            <person name="Birtle Z."/>
            <person name="Marques A.C."/>
            <person name="Graves T."/>
            <person name="Zhou S."/>
            <person name="Teague B."/>
            <person name="Potamousis K."/>
            <person name="Churas C."/>
            <person name="Place M."/>
            <person name="Herschleb J."/>
            <person name="Runnheim R."/>
            <person name="Forrest D."/>
            <person name="Amos-Landgraf J."/>
            <person name="Schwartz D.C."/>
            <person name="Cheng Z."/>
            <person name="Lindblad-Toh K."/>
            <person name="Eichler E.E."/>
            <person name="Ponting C.P."/>
        </authorList>
    </citation>
    <scope>NUCLEOTIDE SEQUENCE [LARGE SCALE GENOMIC DNA]</scope>
    <source>
        <strain>C57BL/6J</strain>
    </source>
</reference>
<reference key="4">
    <citation type="journal article" date="2004" name="Genome Res.">
        <title>The status, quality, and expansion of the NIH full-length cDNA project: the Mammalian Gene Collection (MGC).</title>
        <authorList>
            <consortium name="The MGC Project Team"/>
        </authorList>
    </citation>
    <scope>NUCLEOTIDE SEQUENCE [LARGE SCALE MRNA]</scope>
    <source>
        <tissue>Salivary gland</tissue>
    </source>
</reference>
<reference key="5">
    <citation type="journal article" date="2001" name="Gene">
        <title>Genomic organization and expression profile of the parvin family of focal adhesion proteins in mice and humans.</title>
        <authorList>
            <person name="Korenbaum E."/>
            <person name="Olski T.M."/>
            <person name="Noegel A.A."/>
        </authorList>
    </citation>
    <scope>TISSUE SPECIFICITY</scope>
</reference>
<reference key="6">
    <citation type="journal article" date="2010" name="Cell">
        <title>A tissue-specific atlas of mouse protein phosphorylation and expression.</title>
        <authorList>
            <person name="Huttlin E.L."/>
            <person name="Jedrychowski M.P."/>
            <person name="Elias J.E."/>
            <person name="Goswami T."/>
            <person name="Rad R."/>
            <person name="Beausoleil S.A."/>
            <person name="Villen J."/>
            <person name="Haas W."/>
            <person name="Sowa M.E."/>
            <person name="Gygi S.P."/>
        </authorList>
    </citation>
    <scope>IDENTIFICATION BY MASS SPECTROMETRY [LARGE SCALE ANALYSIS]</scope>
    <source>
        <tissue>Spleen</tissue>
    </source>
</reference>